<keyword id="KW-0328">Glycosyltransferase</keyword>
<keyword id="KW-0479">Metal-binding</keyword>
<keyword id="KW-0671">Queuosine biosynthesis</keyword>
<keyword id="KW-0808">Transferase</keyword>
<keyword id="KW-0819">tRNA processing</keyword>
<keyword id="KW-0862">Zinc</keyword>
<feature type="chain" id="PRO_1000198021" description="Queuine tRNA-ribosyltransferase">
    <location>
        <begin position="1"/>
        <end position="374"/>
    </location>
</feature>
<feature type="region of interest" description="RNA binding" evidence="1">
    <location>
        <begin position="245"/>
        <end position="251"/>
    </location>
</feature>
<feature type="region of interest" description="RNA binding; important for wobble base 34 recognition" evidence="1">
    <location>
        <begin position="269"/>
        <end position="273"/>
    </location>
</feature>
<feature type="active site" description="Proton acceptor" evidence="1">
    <location>
        <position position="89"/>
    </location>
</feature>
<feature type="active site" description="Nucleophile" evidence="1">
    <location>
        <position position="264"/>
    </location>
</feature>
<feature type="binding site" evidence="1">
    <location>
        <begin position="89"/>
        <end position="93"/>
    </location>
    <ligand>
        <name>substrate</name>
    </ligand>
</feature>
<feature type="binding site" evidence="1">
    <location>
        <position position="143"/>
    </location>
    <ligand>
        <name>substrate</name>
    </ligand>
</feature>
<feature type="binding site" evidence="1">
    <location>
        <position position="187"/>
    </location>
    <ligand>
        <name>substrate</name>
    </ligand>
</feature>
<feature type="binding site" evidence="1">
    <location>
        <position position="214"/>
    </location>
    <ligand>
        <name>substrate</name>
    </ligand>
</feature>
<feature type="binding site" evidence="1">
    <location>
        <position position="302"/>
    </location>
    <ligand>
        <name>Zn(2+)</name>
        <dbReference type="ChEBI" id="CHEBI:29105"/>
    </ligand>
</feature>
<feature type="binding site" evidence="1">
    <location>
        <position position="304"/>
    </location>
    <ligand>
        <name>Zn(2+)</name>
        <dbReference type="ChEBI" id="CHEBI:29105"/>
    </ligand>
</feature>
<feature type="binding site" evidence="1">
    <location>
        <position position="307"/>
    </location>
    <ligand>
        <name>Zn(2+)</name>
        <dbReference type="ChEBI" id="CHEBI:29105"/>
    </ligand>
</feature>
<feature type="binding site" evidence="1">
    <location>
        <position position="333"/>
    </location>
    <ligand>
        <name>Zn(2+)</name>
        <dbReference type="ChEBI" id="CHEBI:29105"/>
    </ligand>
</feature>
<accession>B8EDJ7</accession>
<name>TGT_SHEB2</name>
<organism>
    <name type="scientific">Shewanella baltica (strain OS223)</name>
    <dbReference type="NCBI Taxonomy" id="407976"/>
    <lineage>
        <taxon>Bacteria</taxon>
        <taxon>Pseudomonadati</taxon>
        <taxon>Pseudomonadota</taxon>
        <taxon>Gammaproteobacteria</taxon>
        <taxon>Alteromonadales</taxon>
        <taxon>Shewanellaceae</taxon>
        <taxon>Shewanella</taxon>
    </lineage>
</organism>
<gene>
    <name evidence="1" type="primary">tgt</name>
    <name type="ordered locus">Sbal223_1570</name>
</gene>
<evidence type="ECO:0000255" key="1">
    <source>
        <dbReference type="HAMAP-Rule" id="MF_00168"/>
    </source>
</evidence>
<dbReference type="EC" id="2.4.2.29" evidence="1"/>
<dbReference type="EMBL" id="CP001252">
    <property type="protein sequence ID" value="ACK46075.1"/>
    <property type="molecule type" value="Genomic_DNA"/>
</dbReference>
<dbReference type="RefSeq" id="WP_006082277.1">
    <property type="nucleotide sequence ID" value="NC_011663.1"/>
</dbReference>
<dbReference type="SMR" id="B8EDJ7"/>
<dbReference type="GeneID" id="11772965"/>
<dbReference type="KEGG" id="sbp:Sbal223_1570"/>
<dbReference type="HOGENOM" id="CLU_022060_0_1_6"/>
<dbReference type="UniPathway" id="UPA00392"/>
<dbReference type="Proteomes" id="UP000002507">
    <property type="component" value="Chromosome"/>
</dbReference>
<dbReference type="GO" id="GO:0005829">
    <property type="term" value="C:cytosol"/>
    <property type="evidence" value="ECO:0007669"/>
    <property type="project" value="TreeGrafter"/>
</dbReference>
<dbReference type="GO" id="GO:0046872">
    <property type="term" value="F:metal ion binding"/>
    <property type="evidence" value="ECO:0007669"/>
    <property type="project" value="UniProtKB-KW"/>
</dbReference>
<dbReference type="GO" id="GO:0008479">
    <property type="term" value="F:tRNA-guanosine(34) queuine transglycosylase activity"/>
    <property type="evidence" value="ECO:0007669"/>
    <property type="project" value="UniProtKB-UniRule"/>
</dbReference>
<dbReference type="GO" id="GO:0008616">
    <property type="term" value="P:queuosine biosynthetic process"/>
    <property type="evidence" value="ECO:0007669"/>
    <property type="project" value="UniProtKB-UniRule"/>
</dbReference>
<dbReference type="GO" id="GO:0002099">
    <property type="term" value="P:tRNA wobble guanine modification"/>
    <property type="evidence" value="ECO:0007669"/>
    <property type="project" value="TreeGrafter"/>
</dbReference>
<dbReference type="GO" id="GO:0101030">
    <property type="term" value="P:tRNA-guanine transglycosylation"/>
    <property type="evidence" value="ECO:0007669"/>
    <property type="project" value="InterPro"/>
</dbReference>
<dbReference type="FunFam" id="3.20.20.105:FF:000001">
    <property type="entry name" value="Queuine tRNA-ribosyltransferase"/>
    <property type="match status" value="1"/>
</dbReference>
<dbReference type="Gene3D" id="3.20.20.105">
    <property type="entry name" value="Queuine tRNA-ribosyltransferase-like"/>
    <property type="match status" value="1"/>
</dbReference>
<dbReference type="HAMAP" id="MF_00168">
    <property type="entry name" value="Q_tRNA_Tgt"/>
    <property type="match status" value="1"/>
</dbReference>
<dbReference type="InterPro" id="IPR050076">
    <property type="entry name" value="ArchSynthase1/Queuine_TRR"/>
</dbReference>
<dbReference type="InterPro" id="IPR004803">
    <property type="entry name" value="TGT"/>
</dbReference>
<dbReference type="InterPro" id="IPR036511">
    <property type="entry name" value="TGT-like_sf"/>
</dbReference>
<dbReference type="InterPro" id="IPR002616">
    <property type="entry name" value="tRNA_ribo_trans-like"/>
</dbReference>
<dbReference type="NCBIfam" id="TIGR00430">
    <property type="entry name" value="Q_tRNA_tgt"/>
    <property type="match status" value="1"/>
</dbReference>
<dbReference type="NCBIfam" id="TIGR00449">
    <property type="entry name" value="tgt_general"/>
    <property type="match status" value="1"/>
</dbReference>
<dbReference type="PANTHER" id="PTHR46499">
    <property type="entry name" value="QUEUINE TRNA-RIBOSYLTRANSFERASE"/>
    <property type="match status" value="1"/>
</dbReference>
<dbReference type="PANTHER" id="PTHR46499:SF1">
    <property type="entry name" value="QUEUINE TRNA-RIBOSYLTRANSFERASE"/>
    <property type="match status" value="1"/>
</dbReference>
<dbReference type="Pfam" id="PF01702">
    <property type="entry name" value="TGT"/>
    <property type="match status" value="1"/>
</dbReference>
<dbReference type="SUPFAM" id="SSF51713">
    <property type="entry name" value="tRNA-guanine transglycosylase"/>
    <property type="match status" value="1"/>
</dbReference>
<protein>
    <recommendedName>
        <fullName evidence="1">Queuine tRNA-ribosyltransferase</fullName>
        <ecNumber evidence="1">2.4.2.29</ecNumber>
    </recommendedName>
    <alternativeName>
        <fullName evidence="1">Guanine insertion enzyme</fullName>
    </alternativeName>
    <alternativeName>
        <fullName evidence="1">tRNA-guanine transglycosylase</fullName>
    </alternativeName>
</protein>
<reference key="1">
    <citation type="submission" date="2008-12" db="EMBL/GenBank/DDBJ databases">
        <title>Complete sequence of chromosome of Shewanella baltica OS223.</title>
        <authorList>
            <consortium name="US DOE Joint Genome Institute"/>
            <person name="Lucas S."/>
            <person name="Copeland A."/>
            <person name="Lapidus A."/>
            <person name="Glavina del Rio T."/>
            <person name="Dalin E."/>
            <person name="Tice H."/>
            <person name="Bruce D."/>
            <person name="Goodwin L."/>
            <person name="Pitluck S."/>
            <person name="Chertkov O."/>
            <person name="Meincke L."/>
            <person name="Brettin T."/>
            <person name="Detter J.C."/>
            <person name="Han C."/>
            <person name="Kuske C.R."/>
            <person name="Larimer F."/>
            <person name="Land M."/>
            <person name="Hauser L."/>
            <person name="Kyrpides N."/>
            <person name="Ovchinnikova G."/>
            <person name="Brettar I."/>
            <person name="Rodrigues J."/>
            <person name="Konstantinidis K."/>
            <person name="Tiedje J."/>
        </authorList>
    </citation>
    <scope>NUCLEOTIDE SEQUENCE [LARGE SCALE GENOMIC DNA]</scope>
    <source>
        <strain>OS223</strain>
    </source>
</reference>
<sequence>MKFELDTTDGRARRGRLIFDRGTVETPAFMPVGTYGTVKGMTPEEVRATGADILLGNTFHLWLRPGEEIMRKHGDLHDFMNWQRPILTDSGGFQVFSLGDIRKITEEGVHFRSPINGEKIFLDPEKSMQIQDALGSDVVMIFDECTPYPATEDEARKSMQMSLRWARRSRDEFDRLENPNSLFGIIQGGVYEDLRDESLKGLVDIGFDGYAVGGLAVGEPKADMHRILEHICPQIPADKPRYLMGVGKPEDLVEGVRRGVDMFDCVMPTRNARNGHLFTSEGVIKIRNARHRDDTSPLDTKCDCYTCKNYSRAYLYHLDRCNEILGARLNTIHNLRYYQMLMEGLRGAIETGTLDAFVADFYTSQGREVPELVD</sequence>
<comment type="function">
    <text evidence="1">Catalyzes the base-exchange of a guanine (G) residue with the queuine precursor 7-aminomethyl-7-deazaguanine (PreQ1) at position 34 (anticodon wobble position) in tRNAs with GU(N) anticodons (tRNA-Asp, -Asn, -His and -Tyr). Catalysis occurs through a double-displacement mechanism. The nucleophile active site attacks the C1' of nucleotide 34 to detach the guanine base from the RNA, forming a covalent enzyme-RNA intermediate. The proton acceptor active site deprotonates the incoming PreQ1, allowing a nucleophilic attack on the C1' of the ribose to form the product. After dissociation, two additional enzymatic reactions on the tRNA convert PreQ1 to queuine (Q), resulting in the hypermodified nucleoside queuosine (7-(((4,5-cis-dihydroxy-2-cyclopenten-1-yl)amino)methyl)-7-deazaguanosine).</text>
</comment>
<comment type="catalytic activity">
    <reaction evidence="1">
        <text>7-aminomethyl-7-carbaguanine + guanosine(34) in tRNA = 7-aminomethyl-7-carbaguanosine(34) in tRNA + guanine</text>
        <dbReference type="Rhea" id="RHEA:24104"/>
        <dbReference type="Rhea" id="RHEA-COMP:10341"/>
        <dbReference type="Rhea" id="RHEA-COMP:10342"/>
        <dbReference type="ChEBI" id="CHEBI:16235"/>
        <dbReference type="ChEBI" id="CHEBI:58703"/>
        <dbReference type="ChEBI" id="CHEBI:74269"/>
        <dbReference type="ChEBI" id="CHEBI:82833"/>
        <dbReference type="EC" id="2.4.2.29"/>
    </reaction>
</comment>
<comment type="cofactor">
    <cofactor evidence="1">
        <name>Zn(2+)</name>
        <dbReference type="ChEBI" id="CHEBI:29105"/>
    </cofactor>
    <text evidence="1">Binds 1 zinc ion per subunit.</text>
</comment>
<comment type="pathway">
    <text evidence="1">tRNA modification; tRNA-queuosine biosynthesis.</text>
</comment>
<comment type="subunit">
    <text evidence="1">Homodimer. Within each dimer, one monomer is responsible for RNA recognition and catalysis, while the other monomer binds to the replacement base PreQ1.</text>
</comment>
<comment type="similarity">
    <text evidence="1">Belongs to the queuine tRNA-ribosyltransferase family.</text>
</comment>
<proteinExistence type="inferred from homology"/>